<organism>
    <name type="scientific">Aptera fusca</name>
    <name type="common">Cape Mountain cockroach</name>
    <name type="synonym">Giant Table Mountain cockroach</name>
    <dbReference type="NCBI Taxonomy" id="344696"/>
    <lineage>
        <taxon>Eukaryota</taxon>
        <taxon>Metazoa</taxon>
        <taxon>Ecdysozoa</taxon>
        <taxon>Arthropoda</taxon>
        <taxon>Hexapoda</taxon>
        <taxon>Insecta</taxon>
        <taxon>Pterygota</taxon>
        <taxon>Neoptera</taxon>
        <taxon>Polyneoptera</taxon>
        <taxon>Dictyoptera</taxon>
        <taxon>Blattodea</taxon>
        <taxon>Blaberoidea</taxon>
        <taxon>Blaberidae</taxon>
        <taxon>Epilamprinae</taxon>
        <taxon>Aptera</taxon>
    </lineage>
</organism>
<dbReference type="GO" id="GO:0005576">
    <property type="term" value="C:extracellular region"/>
    <property type="evidence" value="ECO:0007669"/>
    <property type="project" value="UniProtKB-SubCell"/>
</dbReference>
<dbReference type="GO" id="GO:0007218">
    <property type="term" value="P:neuropeptide signaling pathway"/>
    <property type="evidence" value="ECO:0007669"/>
    <property type="project" value="UniProtKB-KW"/>
</dbReference>
<dbReference type="InterPro" id="IPR013231">
    <property type="entry name" value="Periviscerokinin"/>
</dbReference>
<dbReference type="Pfam" id="PF08259">
    <property type="entry name" value="Periviscerokin"/>
    <property type="match status" value="1"/>
</dbReference>
<protein>
    <recommendedName>
        <fullName>Periviscerokinin-3</fullName>
        <shortName>AptFu-PVK-3</shortName>
    </recommendedName>
</protein>
<sequence>GSSGIIPFPRV</sequence>
<keyword id="KW-0027">Amidation</keyword>
<keyword id="KW-0903">Direct protein sequencing</keyword>
<keyword id="KW-0527">Neuropeptide</keyword>
<keyword id="KW-0964">Secreted</keyword>
<comment type="function">
    <text evidence="4">Mediates visceral muscle contractile activity (myotropic activity).</text>
</comment>
<comment type="subcellular location">
    <subcellularLocation>
        <location evidence="4">Secreted</location>
    </subcellularLocation>
</comment>
<comment type="tissue specificity">
    <text evidence="3">Expressed in abdominal perisympathetic organs and abdominal ganglia.</text>
</comment>
<comment type="mass spectrometry">
    <text>With amidation.</text>
</comment>
<comment type="similarity">
    <text evidence="1">Belongs to the periviscerokinin family.</text>
</comment>
<evidence type="ECO:0000255" key="1"/>
<evidence type="ECO:0000269" key="2">
    <source>
    </source>
</evidence>
<evidence type="ECO:0000269" key="3">
    <source ref="2"/>
</evidence>
<evidence type="ECO:0000305" key="4"/>
<accession>P84661</accession>
<name>PVK3_APTFU</name>
<proteinExistence type="evidence at protein level"/>
<feature type="peptide" id="PRO_0000044281" description="Periviscerokinin-3">
    <location>
        <begin position="1"/>
        <end position="11"/>
    </location>
</feature>
<feature type="modified residue" description="Valine amide" evidence="2 3">
    <location>
        <position position="11"/>
    </location>
</feature>
<reference key="1">
    <citation type="journal article" date="2009" name="BMC Evol. Biol.">
        <title>A proteomic approach for studying insect phylogeny: CAPA peptides of ancient insect taxa (Dictyoptera, Blattoptera) as a test case.</title>
        <authorList>
            <person name="Roth S."/>
            <person name="Fromm B."/>
            <person name="Gaede G."/>
            <person name="Predel R."/>
        </authorList>
    </citation>
    <scope>PROTEIN SEQUENCE</scope>
    <scope>AMIDATION AT VAL-11</scope>
    <source>
        <tissue>Abdominal perisympathetic organs</tissue>
    </source>
</reference>
<reference evidence="4" key="2">
    <citation type="submission" date="2005-09" db="UniProtKB">
        <authorList>
            <person name="Predel R."/>
        </authorList>
    </citation>
    <scope>PROTEIN SEQUENCE</scope>
    <scope>TISSUE SPECIFICITY</scope>
    <scope>MASS SPECTROMETRY</scope>
    <scope>AMIDATION AT VAL-11</scope>
    <source>
        <tissue>Abdominal perisympathetic organs</tissue>
    </source>
</reference>